<organism>
    <name type="scientific">Corynebacterium glutamicum (strain ATCC 13032 / DSM 20300 / JCM 1318 / BCRC 11384 / CCUG 27702 / LMG 3730 / NBRC 12168 / NCIMB 10025 / NRRL B-2784 / 534)</name>
    <dbReference type="NCBI Taxonomy" id="196627"/>
    <lineage>
        <taxon>Bacteria</taxon>
        <taxon>Bacillati</taxon>
        <taxon>Actinomycetota</taxon>
        <taxon>Actinomycetes</taxon>
        <taxon>Mycobacteriales</taxon>
        <taxon>Corynebacteriaceae</taxon>
        <taxon>Corynebacterium</taxon>
    </lineage>
</organism>
<feature type="chain" id="PRO_0000104278" description="Large ribosomal subunit protein uL11">
    <location>
        <begin position="1"/>
        <end position="145"/>
    </location>
</feature>
<accession>Q9LAK6</accession>
<sequence length="145" mass="15330">MAPKKKKKVTGLIKLQIQAGQANPAPPVGPALGAHGVNIMEFCKAYNAATENQRGNVVPVEITVYEDRSFDFKLKTPPAAKLLLKAAGLQKGSGVPHTQKVGKVSMAQVREIAETKKEDLNARDIDAAAKIIAGTARSMGITVEG</sequence>
<keyword id="KW-0488">Methylation</keyword>
<keyword id="KW-1185">Reference proteome</keyword>
<keyword id="KW-0687">Ribonucleoprotein</keyword>
<keyword id="KW-0689">Ribosomal protein</keyword>
<keyword id="KW-0694">RNA-binding</keyword>
<keyword id="KW-0699">rRNA-binding</keyword>
<protein>
    <recommendedName>
        <fullName evidence="1">Large ribosomal subunit protein uL11</fullName>
    </recommendedName>
    <alternativeName>
        <fullName evidence="2">50S ribosomal protein L11</fullName>
    </alternativeName>
</protein>
<proteinExistence type="inferred from homology"/>
<reference key="1">
    <citation type="journal article" date="2001" name="Microbiology">
        <title>A Corynebacterium glutamicum mutant with a defined deletion within the rplK gene is impaired in (p)ppGpp accumulation upon amino acid starvation.</title>
        <authorList>
            <person name="Wehmeier L."/>
            <person name="Brockmann-Gretza O."/>
            <person name="Pisabarro A."/>
            <person name="Tauch A."/>
            <person name="Puhler A."/>
            <person name="Martin J.F."/>
            <person name="Kalinowski J."/>
        </authorList>
    </citation>
    <scope>NUCLEOTIDE SEQUENCE [GENOMIC DNA]</scope>
    <source>
        <strain>ATCC 13032 / DSM 20300 / JCM 1318 / BCRC 11384 / CCUG 27702 / LMG 3730 / NBRC 12168 / NCIMB 10025 / NRRL B-2784 / 534</strain>
    </source>
</reference>
<reference key="2">
    <citation type="journal article" date="2001" name="Appl. Environ. Microbiol.">
        <title>Organization and transcriptional analysis of a six gene cluster around the rplK-prlA operon of Corynebacterium glutamicum encoding the ribosomal proteins L11 and L1.</title>
        <authorList>
            <person name="Barreiro C."/>
            <person name="Gonzalez-Lavado E."/>
            <person name="Martin J.F."/>
        </authorList>
    </citation>
    <scope>NUCLEOTIDE SEQUENCE [GENOMIC DNA]</scope>
    <source>
        <strain>ATCC 13032 / DSM 20300 / JCM 1318 / BCRC 11384 / CCUG 27702 / LMG 3730 / NBRC 12168 / NCIMB 10025 / NRRL B-2784 / 534</strain>
    </source>
</reference>
<reference key="3">
    <citation type="journal article" date="2003" name="Appl. Microbiol. Biotechnol.">
        <title>The Corynebacterium glutamicum genome: features and impacts on biotechnological processes.</title>
        <authorList>
            <person name="Ikeda M."/>
            <person name="Nakagawa S."/>
        </authorList>
    </citation>
    <scope>NUCLEOTIDE SEQUENCE [LARGE SCALE GENOMIC DNA]</scope>
    <source>
        <strain>ATCC 13032 / DSM 20300 / JCM 1318 / BCRC 11384 / CCUG 27702 / LMG 3730 / NBRC 12168 / NCIMB 10025 / NRRL B-2784 / 534</strain>
    </source>
</reference>
<reference key="4">
    <citation type="journal article" date="2003" name="J. Biotechnol.">
        <title>The complete Corynebacterium glutamicum ATCC 13032 genome sequence and its impact on the production of L-aspartate-derived amino acids and vitamins.</title>
        <authorList>
            <person name="Kalinowski J."/>
            <person name="Bathe B."/>
            <person name="Bartels D."/>
            <person name="Bischoff N."/>
            <person name="Bott M."/>
            <person name="Burkovski A."/>
            <person name="Dusch N."/>
            <person name="Eggeling L."/>
            <person name="Eikmanns B.J."/>
            <person name="Gaigalat L."/>
            <person name="Goesmann A."/>
            <person name="Hartmann M."/>
            <person name="Huthmacher K."/>
            <person name="Kraemer R."/>
            <person name="Linke B."/>
            <person name="McHardy A.C."/>
            <person name="Meyer F."/>
            <person name="Moeckel B."/>
            <person name="Pfefferle W."/>
            <person name="Puehler A."/>
            <person name="Rey D.A."/>
            <person name="Rueckert C."/>
            <person name="Rupp O."/>
            <person name="Sahm H."/>
            <person name="Wendisch V.F."/>
            <person name="Wiegraebe I."/>
            <person name="Tauch A."/>
        </authorList>
    </citation>
    <scope>NUCLEOTIDE SEQUENCE [LARGE SCALE GENOMIC DNA]</scope>
    <source>
        <strain>ATCC 13032 / DSM 20300 / JCM 1318 / BCRC 11384 / CCUG 27702 / LMG 3730 / NBRC 12168 / NCIMB 10025 / NRRL B-2784 / 534</strain>
    </source>
</reference>
<evidence type="ECO:0000255" key="1">
    <source>
        <dbReference type="HAMAP-Rule" id="MF_00736"/>
    </source>
</evidence>
<evidence type="ECO:0000305" key="2"/>
<comment type="function">
    <text evidence="1">Forms part of the ribosomal stalk which helps the ribosome interact with GTP-bound translation factors.</text>
</comment>
<comment type="subunit">
    <text evidence="1">Part of the ribosomal stalk of the 50S ribosomal subunit. Interacts with L10 and the large rRNA to form the base of the stalk. L10 forms an elongated spine to which L12 dimers bind in a sequential fashion forming a multimeric L10(L12)X complex.</text>
</comment>
<comment type="PTM">
    <text evidence="1">One or more lysine residues are methylated.</text>
</comment>
<comment type="similarity">
    <text evidence="1">Belongs to the universal ribosomal protein uL11 family.</text>
</comment>
<gene>
    <name evidence="1" type="primary">rplK</name>
    <name type="ordered locus">Cgl0476</name>
    <name type="ordered locus">cg0563</name>
</gene>
<dbReference type="EMBL" id="AF130462">
    <property type="protein sequence ID" value="AAF36507.1"/>
    <property type="molecule type" value="Genomic_DNA"/>
</dbReference>
<dbReference type="EMBL" id="AJ300822">
    <property type="protein sequence ID" value="CAC38384.1"/>
    <property type="molecule type" value="Genomic_DNA"/>
</dbReference>
<dbReference type="EMBL" id="BA000036">
    <property type="protein sequence ID" value="BAB97869.1"/>
    <property type="molecule type" value="Genomic_DNA"/>
</dbReference>
<dbReference type="EMBL" id="BX927149">
    <property type="protein sequence ID" value="CAF19190.1"/>
    <property type="molecule type" value="Genomic_DNA"/>
</dbReference>
<dbReference type="RefSeq" id="NP_599721.1">
    <property type="nucleotide sequence ID" value="NC_003450.3"/>
</dbReference>
<dbReference type="RefSeq" id="WP_011013679.1">
    <property type="nucleotide sequence ID" value="NC_006958.1"/>
</dbReference>
<dbReference type="SMR" id="Q9LAK6"/>
<dbReference type="STRING" id="196627.cg0563"/>
<dbReference type="GeneID" id="1021481"/>
<dbReference type="KEGG" id="cgb:cg0563"/>
<dbReference type="KEGG" id="cgl:Cgl0476"/>
<dbReference type="PATRIC" id="fig|196627.13.peg.474"/>
<dbReference type="eggNOG" id="COG0080">
    <property type="taxonomic scope" value="Bacteria"/>
</dbReference>
<dbReference type="HOGENOM" id="CLU_074237_2_1_11"/>
<dbReference type="OrthoDB" id="9802408at2"/>
<dbReference type="BioCyc" id="CORYNE:G18NG-10038-MONOMER"/>
<dbReference type="Proteomes" id="UP000000582">
    <property type="component" value="Chromosome"/>
</dbReference>
<dbReference type="Proteomes" id="UP000001009">
    <property type="component" value="Chromosome"/>
</dbReference>
<dbReference type="GO" id="GO:0022625">
    <property type="term" value="C:cytosolic large ribosomal subunit"/>
    <property type="evidence" value="ECO:0007669"/>
    <property type="project" value="TreeGrafter"/>
</dbReference>
<dbReference type="GO" id="GO:0070180">
    <property type="term" value="F:large ribosomal subunit rRNA binding"/>
    <property type="evidence" value="ECO:0007669"/>
    <property type="project" value="UniProtKB-UniRule"/>
</dbReference>
<dbReference type="GO" id="GO:0003735">
    <property type="term" value="F:structural constituent of ribosome"/>
    <property type="evidence" value="ECO:0007669"/>
    <property type="project" value="InterPro"/>
</dbReference>
<dbReference type="GO" id="GO:0006412">
    <property type="term" value="P:translation"/>
    <property type="evidence" value="ECO:0007669"/>
    <property type="project" value="UniProtKB-UniRule"/>
</dbReference>
<dbReference type="CDD" id="cd00349">
    <property type="entry name" value="Ribosomal_L11"/>
    <property type="match status" value="1"/>
</dbReference>
<dbReference type="FunFam" id="1.10.10.250:FF:000001">
    <property type="entry name" value="50S ribosomal protein L11"/>
    <property type="match status" value="1"/>
</dbReference>
<dbReference type="FunFam" id="3.30.1550.10:FF:000001">
    <property type="entry name" value="50S ribosomal protein L11"/>
    <property type="match status" value="1"/>
</dbReference>
<dbReference type="Gene3D" id="1.10.10.250">
    <property type="entry name" value="Ribosomal protein L11, C-terminal domain"/>
    <property type="match status" value="1"/>
</dbReference>
<dbReference type="Gene3D" id="3.30.1550.10">
    <property type="entry name" value="Ribosomal protein L11/L12, N-terminal domain"/>
    <property type="match status" value="1"/>
</dbReference>
<dbReference type="HAMAP" id="MF_00736">
    <property type="entry name" value="Ribosomal_uL11"/>
    <property type="match status" value="1"/>
</dbReference>
<dbReference type="InterPro" id="IPR000911">
    <property type="entry name" value="Ribosomal_uL11"/>
</dbReference>
<dbReference type="InterPro" id="IPR006519">
    <property type="entry name" value="Ribosomal_uL11_bac-typ"/>
</dbReference>
<dbReference type="InterPro" id="IPR020783">
    <property type="entry name" value="Ribosomal_uL11_C"/>
</dbReference>
<dbReference type="InterPro" id="IPR036769">
    <property type="entry name" value="Ribosomal_uL11_C_sf"/>
</dbReference>
<dbReference type="InterPro" id="IPR020785">
    <property type="entry name" value="Ribosomal_uL11_CS"/>
</dbReference>
<dbReference type="InterPro" id="IPR020784">
    <property type="entry name" value="Ribosomal_uL11_N"/>
</dbReference>
<dbReference type="InterPro" id="IPR036796">
    <property type="entry name" value="Ribosomal_uL11_N_sf"/>
</dbReference>
<dbReference type="NCBIfam" id="TIGR01632">
    <property type="entry name" value="L11_bact"/>
    <property type="match status" value="1"/>
</dbReference>
<dbReference type="PANTHER" id="PTHR11661">
    <property type="entry name" value="60S RIBOSOMAL PROTEIN L12"/>
    <property type="match status" value="1"/>
</dbReference>
<dbReference type="PANTHER" id="PTHR11661:SF1">
    <property type="entry name" value="LARGE RIBOSOMAL SUBUNIT PROTEIN UL11M"/>
    <property type="match status" value="1"/>
</dbReference>
<dbReference type="Pfam" id="PF00298">
    <property type="entry name" value="Ribosomal_L11"/>
    <property type="match status" value="1"/>
</dbReference>
<dbReference type="Pfam" id="PF03946">
    <property type="entry name" value="Ribosomal_L11_N"/>
    <property type="match status" value="1"/>
</dbReference>
<dbReference type="SMART" id="SM00649">
    <property type="entry name" value="RL11"/>
    <property type="match status" value="1"/>
</dbReference>
<dbReference type="SUPFAM" id="SSF54747">
    <property type="entry name" value="Ribosomal L11/L12e N-terminal domain"/>
    <property type="match status" value="1"/>
</dbReference>
<dbReference type="SUPFAM" id="SSF46906">
    <property type="entry name" value="Ribosomal protein L11, C-terminal domain"/>
    <property type="match status" value="1"/>
</dbReference>
<dbReference type="PROSITE" id="PS00359">
    <property type="entry name" value="RIBOSOMAL_L11"/>
    <property type="match status" value="1"/>
</dbReference>
<name>RL11_CORGL</name>